<keyword id="KW-0066">ATP synthesis</keyword>
<keyword id="KW-0138">CF(0)</keyword>
<keyword id="KW-0375">Hydrogen ion transport</keyword>
<keyword id="KW-0406">Ion transport</keyword>
<keyword id="KW-0472">Membrane</keyword>
<keyword id="KW-0496">Mitochondrion</keyword>
<keyword id="KW-0812">Transmembrane</keyword>
<keyword id="KW-1133">Transmembrane helix</keyword>
<keyword id="KW-0813">Transport</keyword>
<geneLocation type="mitochondrion"/>
<gene>
    <name type="primary">MT-ATP8</name>
    <name type="synonym">ATP8</name>
    <name type="synonym">ATPASE8</name>
    <name type="synonym">MTATP8</name>
</gene>
<accession>P07513</accession>
<reference key="1">
    <citation type="journal article" date="1985" name="FEBS Lett.">
        <title>Overlapping reading frames in Oenothera mitochondria.</title>
        <authorList>
            <person name="Hiesel R."/>
            <person name="Brennicke A."/>
        </authorList>
    </citation>
    <scope>NUCLEOTIDE SEQUENCE</scope>
    <source>
        <strain>cv. Munzia</strain>
    </source>
</reference>
<feature type="chain" id="PRO_0000195555" description="ATP synthase protein 8">
    <location>
        <begin position="1"/>
        <end position="59"/>
    </location>
</feature>
<feature type="transmembrane region" description="Helical" evidence="2">
    <location>
        <begin position="7"/>
        <end position="23"/>
    </location>
</feature>
<name>ATP8_OENBE</name>
<evidence type="ECO:0000250" key="1"/>
<evidence type="ECO:0000255" key="2"/>
<evidence type="ECO:0000305" key="3"/>
<comment type="function">
    <text evidence="1">Mitochondrial membrane ATP synthase (F(1)F(0) ATP synthase or Complex V) produces ATP from ADP in the presence of a proton gradient across the membrane which is generated by electron transport complexes of the respiratory chain. F-type ATPases consist of two structural domains, F(1) - containing the extramembraneous catalytic core and F(0) - containing the membrane proton channel, linked together by a central stalk and a peripheral stalk. During catalysis, ATP synthesis in the catalytic domain of F(1) is coupled via a rotary mechanism of the central stalk subunits to proton translocation. Part of the complex F(0) domain. Minor subunit located with subunit a in the membrane (By similarity).</text>
</comment>
<comment type="subunit">
    <text evidence="1">F-type ATPases have 2 components, CF(1) - the catalytic core - and CF(0) - the membrane proton channel.</text>
</comment>
<comment type="subcellular location">
    <subcellularLocation>
        <location>Mitochondrion membrane</location>
        <topology>Single-pass membrane protein</topology>
    </subcellularLocation>
</comment>
<comment type="similarity">
    <text evidence="3">Belongs to the ATPase protein 8 family.</text>
</comment>
<organism>
    <name type="scientific">Oenothera berteroana</name>
    <name type="common">Bertero's evening primrose</name>
    <dbReference type="NCBI Taxonomy" id="3950"/>
    <lineage>
        <taxon>Eukaryota</taxon>
        <taxon>Viridiplantae</taxon>
        <taxon>Streptophyta</taxon>
        <taxon>Embryophyta</taxon>
        <taxon>Tracheophyta</taxon>
        <taxon>Spermatophyta</taxon>
        <taxon>Magnoliopsida</taxon>
        <taxon>eudicotyledons</taxon>
        <taxon>Gunneridae</taxon>
        <taxon>Pentapetalae</taxon>
        <taxon>rosids</taxon>
        <taxon>malvids</taxon>
        <taxon>Myrtales</taxon>
        <taxon>Onagraceae</taxon>
        <taxon>Onagroideae</taxon>
        <taxon>Onagreae</taxon>
        <taxon>Oenothera</taxon>
    </lineage>
</organism>
<proteinExistence type="inferred from homology"/>
<sequence length="59" mass="7009">MPFLVGLSPPFLYFELIGHFQVEPSPTPTIKGRKWWRLSLFLIFWGERRVKKETKANDC</sequence>
<dbReference type="GO" id="GO:0031966">
    <property type="term" value="C:mitochondrial membrane"/>
    <property type="evidence" value="ECO:0007669"/>
    <property type="project" value="UniProtKB-SubCell"/>
</dbReference>
<dbReference type="GO" id="GO:0045259">
    <property type="term" value="C:proton-transporting ATP synthase complex"/>
    <property type="evidence" value="ECO:0007669"/>
    <property type="project" value="UniProtKB-KW"/>
</dbReference>
<dbReference type="GO" id="GO:0006754">
    <property type="term" value="P:ATP biosynthetic process"/>
    <property type="evidence" value="ECO:0007669"/>
    <property type="project" value="UniProtKB-KW"/>
</dbReference>
<dbReference type="GO" id="GO:1902600">
    <property type="term" value="P:proton transmembrane transport"/>
    <property type="evidence" value="ECO:0007669"/>
    <property type="project" value="UniProtKB-KW"/>
</dbReference>
<protein>
    <recommendedName>
        <fullName>ATP synthase protein 8</fullName>
    </recommendedName>
    <alternativeName>
        <fullName>A6L</fullName>
    </alternativeName>
    <alternativeName>
        <fullName>F-ATPase subunit 8</fullName>
    </alternativeName>
</protein>